<dbReference type="EC" id="1.1.1.8"/>
<dbReference type="EMBL" id="AE016817">
    <property type="protein sequence ID" value="AAS52231.1"/>
    <property type="molecule type" value="Genomic_DNA"/>
</dbReference>
<dbReference type="RefSeq" id="NP_984407.1">
    <property type="nucleotide sequence ID" value="NM_209760.1"/>
</dbReference>
<dbReference type="SMR" id="Q759G5"/>
<dbReference type="FunCoup" id="Q759G5">
    <property type="interactions" value="646"/>
</dbReference>
<dbReference type="STRING" id="284811.Q759G5"/>
<dbReference type="EnsemblFungi" id="AAS52231">
    <property type="protein sequence ID" value="AAS52231"/>
    <property type="gene ID" value="AGOS_ADR311C"/>
</dbReference>
<dbReference type="GeneID" id="4620680"/>
<dbReference type="KEGG" id="ago:AGOS_ADR311C"/>
<dbReference type="eggNOG" id="KOG2711">
    <property type="taxonomic scope" value="Eukaryota"/>
</dbReference>
<dbReference type="HOGENOM" id="CLU_033449_2_2_1"/>
<dbReference type="InParanoid" id="Q759G5"/>
<dbReference type="OMA" id="NRMFGNM"/>
<dbReference type="OrthoDB" id="10263760at2759"/>
<dbReference type="Proteomes" id="UP000000591">
    <property type="component" value="Chromosome IV"/>
</dbReference>
<dbReference type="GO" id="GO:0005829">
    <property type="term" value="C:cytosol"/>
    <property type="evidence" value="ECO:0000318"/>
    <property type="project" value="GO_Central"/>
</dbReference>
<dbReference type="GO" id="GO:0005634">
    <property type="term" value="C:nucleus"/>
    <property type="evidence" value="ECO:0000318"/>
    <property type="project" value="GO_Central"/>
</dbReference>
<dbReference type="GO" id="GO:0141152">
    <property type="term" value="F:glycerol-3-phosphate dehydrogenase (NAD+) activity"/>
    <property type="evidence" value="ECO:0007669"/>
    <property type="project" value="UniProtKB-EC"/>
</dbReference>
<dbReference type="GO" id="GO:0051287">
    <property type="term" value="F:NAD binding"/>
    <property type="evidence" value="ECO:0007669"/>
    <property type="project" value="InterPro"/>
</dbReference>
<dbReference type="GO" id="GO:0042803">
    <property type="term" value="F:protein homodimerization activity"/>
    <property type="evidence" value="ECO:0007669"/>
    <property type="project" value="InterPro"/>
</dbReference>
<dbReference type="GO" id="GO:0005975">
    <property type="term" value="P:carbohydrate metabolic process"/>
    <property type="evidence" value="ECO:0007669"/>
    <property type="project" value="InterPro"/>
</dbReference>
<dbReference type="GO" id="GO:0046168">
    <property type="term" value="P:glycerol-3-phosphate catabolic process"/>
    <property type="evidence" value="ECO:0007669"/>
    <property type="project" value="InterPro"/>
</dbReference>
<dbReference type="GO" id="GO:0006072">
    <property type="term" value="P:glycerol-3-phosphate metabolic process"/>
    <property type="evidence" value="ECO:0000318"/>
    <property type="project" value="GO_Central"/>
</dbReference>
<dbReference type="FunFam" id="1.10.1040.10:FF:000004">
    <property type="entry name" value="Glycerol-3-phosphate dehydrogenase [NAD(+)]"/>
    <property type="match status" value="1"/>
</dbReference>
<dbReference type="FunFam" id="3.40.50.720:FF:000294">
    <property type="entry name" value="Glycerol-3-phosphate dehydrogenase [NAD(+)]"/>
    <property type="match status" value="1"/>
</dbReference>
<dbReference type="Gene3D" id="1.10.1040.10">
    <property type="entry name" value="N-(1-d-carboxylethyl)-l-norvaline Dehydrogenase, domain 2"/>
    <property type="match status" value="1"/>
</dbReference>
<dbReference type="Gene3D" id="3.40.50.720">
    <property type="entry name" value="NAD(P)-binding Rossmann-like Domain"/>
    <property type="match status" value="1"/>
</dbReference>
<dbReference type="InterPro" id="IPR008927">
    <property type="entry name" value="6-PGluconate_DH-like_C_sf"/>
</dbReference>
<dbReference type="InterPro" id="IPR013328">
    <property type="entry name" value="6PGD_dom2"/>
</dbReference>
<dbReference type="InterPro" id="IPR006168">
    <property type="entry name" value="G3P_DH_NAD-dep"/>
</dbReference>
<dbReference type="InterPro" id="IPR006109">
    <property type="entry name" value="G3P_DH_NAD-dep_C"/>
</dbReference>
<dbReference type="InterPro" id="IPR017751">
    <property type="entry name" value="G3P_DH_NAD-dep_euk"/>
</dbReference>
<dbReference type="InterPro" id="IPR011128">
    <property type="entry name" value="G3P_DH_NAD-dep_N"/>
</dbReference>
<dbReference type="InterPro" id="IPR036291">
    <property type="entry name" value="NAD(P)-bd_dom_sf"/>
</dbReference>
<dbReference type="NCBIfam" id="TIGR03376">
    <property type="entry name" value="glycerol3P_DH"/>
    <property type="match status" value="1"/>
</dbReference>
<dbReference type="PANTHER" id="PTHR11728">
    <property type="entry name" value="GLYCEROL-3-PHOSPHATE DEHYDROGENASE"/>
    <property type="match status" value="1"/>
</dbReference>
<dbReference type="PANTHER" id="PTHR11728:SF8">
    <property type="entry name" value="GLYCEROL-3-PHOSPHATE DEHYDROGENASE [NAD(+)]-RELATED"/>
    <property type="match status" value="1"/>
</dbReference>
<dbReference type="Pfam" id="PF07479">
    <property type="entry name" value="NAD_Gly3P_dh_C"/>
    <property type="match status" value="1"/>
</dbReference>
<dbReference type="Pfam" id="PF01210">
    <property type="entry name" value="NAD_Gly3P_dh_N"/>
    <property type="match status" value="1"/>
</dbReference>
<dbReference type="PRINTS" id="PR00077">
    <property type="entry name" value="GPDHDRGNASE"/>
</dbReference>
<dbReference type="SUPFAM" id="SSF48179">
    <property type="entry name" value="6-phosphogluconate dehydrogenase C-terminal domain-like"/>
    <property type="match status" value="1"/>
</dbReference>
<dbReference type="SUPFAM" id="SSF51735">
    <property type="entry name" value="NAD(P)-binding Rossmann-fold domains"/>
    <property type="match status" value="1"/>
</dbReference>
<dbReference type="PROSITE" id="PS00957">
    <property type="entry name" value="NAD_G3PDH"/>
    <property type="match status" value="1"/>
</dbReference>
<name>GPD_EREGS</name>
<gene>
    <name type="primary">GPD</name>
    <name type="ordered locus">ADR311C</name>
</gene>
<reference key="1">
    <citation type="journal article" date="2004" name="Science">
        <title>The Ashbya gossypii genome as a tool for mapping the ancient Saccharomyces cerevisiae genome.</title>
        <authorList>
            <person name="Dietrich F.S."/>
            <person name="Voegeli S."/>
            <person name="Brachat S."/>
            <person name="Lerch A."/>
            <person name="Gates K."/>
            <person name="Steiner S."/>
            <person name="Mohr C."/>
            <person name="Poehlmann R."/>
            <person name="Luedi P."/>
            <person name="Choi S."/>
            <person name="Wing R.A."/>
            <person name="Flavier A."/>
            <person name="Gaffney T.D."/>
            <person name="Philippsen P."/>
        </authorList>
    </citation>
    <scope>NUCLEOTIDE SEQUENCE [LARGE SCALE GENOMIC DNA]</scope>
    <source>
        <strain>ATCC 10895 / CBS 109.51 / FGSC 9923 / NRRL Y-1056</strain>
    </source>
</reference>
<reference key="2">
    <citation type="journal article" date="2013" name="G3 (Bethesda)">
        <title>Genomes of Ashbya fungi isolated from insects reveal four mating-type loci, numerous translocations, lack of transposons, and distinct gene duplications.</title>
        <authorList>
            <person name="Dietrich F.S."/>
            <person name="Voegeli S."/>
            <person name="Kuo S."/>
            <person name="Philippsen P."/>
        </authorList>
    </citation>
    <scope>GENOME REANNOTATION</scope>
    <source>
        <strain>ATCC 10895 / CBS 109.51 / FGSC 9923 / NRRL Y-1056</strain>
    </source>
</reference>
<comment type="catalytic activity">
    <reaction>
        <text>sn-glycerol 3-phosphate + NAD(+) = dihydroxyacetone phosphate + NADH + H(+)</text>
        <dbReference type="Rhea" id="RHEA:11092"/>
        <dbReference type="ChEBI" id="CHEBI:15378"/>
        <dbReference type="ChEBI" id="CHEBI:57540"/>
        <dbReference type="ChEBI" id="CHEBI:57597"/>
        <dbReference type="ChEBI" id="CHEBI:57642"/>
        <dbReference type="ChEBI" id="CHEBI:57945"/>
        <dbReference type="EC" id="1.1.1.8"/>
    </reaction>
</comment>
<comment type="similarity">
    <text evidence="2">Belongs to the NAD-dependent glycerol-3-phosphate dehydrogenase family.</text>
</comment>
<evidence type="ECO:0000250" key="1">
    <source>
        <dbReference type="UniProtKB" id="P21695"/>
    </source>
</evidence>
<evidence type="ECO:0000305" key="2"/>
<sequence>MVNTTALIRSPTFVAQFRVLKQVNRGLFSQTSYARTHARTSYTHTMAGTDRLQQTSQILSRSTSSEIRLERPFKVTVIGSGNWGTTIAKVVAENTQEYPQLFERRVDMWVFEEQIEGRKLTEIINEQHENVKYLPGITLPENLVANPSVAAAAADADVLVFNIPHQFLGRIVEQLKGHVKPGARAISCLKGFSVGKDGVQLLSTYIEEHLHIPCGALSGANLAPEVAKGNWSETTVAYTLPQDFRGTGKDVDHAVLKKLFHRPYFHVNVVDDVAGISVAGALKNVVALACGFVLGLGWGNNAAAAVQRVGLSEMIKFARMFFPESKVETFYQESAGVADLITTCAGGRNVRIGRAMAETGKSAQELEKELLNGQSSQGIYTTQEVHEWLQQCGKKDEFPLFEAVYKIVYEGVPMSKLPDMLEDA</sequence>
<keyword id="KW-0520">NAD</keyword>
<keyword id="KW-0560">Oxidoreductase</keyword>
<keyword id="KW-1185">Reference proteome</keyword>
<proteinExistence type="inferred from homology"/>
<protein>
    <recommendedName>
        <fullName>Glycerol-3-phosphate dehydrogenase [NAD(+)]</fullName>
        <ecNumber>1.1.1.8</ecNumber>
    </recommendedName>
</protein>
<feature type="chain" id="PRO_0000138085" description="Glycerol-3-phosphate dehydrogenase [NAD(+)]">
    <location>
        <begin position="1"/>
        <end position="424"/>
    </location>
</feature>
<feature type="active site" description="Proton acceptor" evidence="1">
    <location>
        <position position="283"/>
    </location>
</feature>
<feature type="binding site" evidence="1">
    <location>
        <begin position="79"/>
        <end position="84"/>
    </location>
    <ligand>
        <name>NAD(+)</name>
        <dbReference type="ChEBI" id="CHEBI:57540"/>
    </ligand>
</feature>
<feature type="binding site" evidence="1">
    <location>
        <position position="111"/>
    </location>
    <ligand>
        <name>NAD(+)</name>
        <dbReference type="ChEBI" id="CHEBI:57540"/>
    </ligand>
</feature>
<feature type="binding site" evidence="1">
    <location>
        <position position="167"/>
    </location>
    <ligand>
        <name>NAD(+)</name>
        <dbReference type="ChEBI" id="CHEBI:57540"/>
    </ligand>
</feature>
<feature type="binding site" evidence="1">
    <location>
        <position position="190"/>
    </location>
    <ligand>
        <name>substrate</name>
    </ligand>
</feature>
<feature type="binding site" evidence="1">
    <location>
        <position position="223"/>
    </location>
    <ligand>
        <name>NAD(+)</name>
        <dbReference type="ChEBI" id="CHEBI:57540"/>
    </ligand>
</feature>
<feature type="binding site" evidence="1">
    <location>
        <begin position="348"/>
        <end position="349"/>
    </location>
    <ligand>
        <name>substrate</name>
    </ligand>
</feature>
<feature type="binding site" evidence="1">
    <location>
        <position position="348"/>
    </location>
    <ligand>
        <name>NAD(+)</name>
        <dbReference type="ChEBI" id="CHEBI:57540"/>
    </ligand>
</feature>
<feature type="binding site" evidence="1">
    <location>
        <position position="377"/>
    </location>
    <ligand>
        <name>NAD(+)</name>
        <dbReference type="ChEBI" id="CHEBI:57540"/>
    </ligand>
</feature>
<accession>Q759G5</accession>
<organism>
    <name type="scientific">Eremothecium gossypii (strain ATCC 10895 / CBS 109.51 / FGSC 9923 / NRRL Y-1056)</name>
    <name type="common">Yeast</name>
    <name type="synonym">Ashbya gossypii</name>
    <dbReference type="NCBI Taxonomy" id="284811"/>
    <lineage>
        <taxon>Eukaryota</taxon>
        <taxon>Fungi</taxon>
        <taxon>Dikarya</taxon>
        <taxon>Ascomycota</taxon>
        <taxon>Saccharomycotina</taxon>
        <taxon>Saccharomycetes</taxon>
        <taxon>Saccharomycetales</taxon>
        <taxon>Saccharomycetaceae</taxon>
        <taxon>Eremothecium</taxon>
    </lineage>
</organism>